<reference key="1">
    <citation type="book" date="2006" name="Gram positive pathogens, 2nd edition">
        <title>The Staphylococcus aureus NCTC 8325 genome.</title>
        <editorList>
            <person name="Fischetti V."/>
            <person name="Novick R."/>
            <person name="Ferretti J."/>
            <person name="Portnoy D."/>
            <person name="Rood J."/>
        </editorList>
        <authorList>
            <person name="Gillaspy A.F."/>
            <person name="Worrell V."/>
            <person name="Orvis J."/>
            <person name="Roe B.A."/>
            <person name="Dyer D.W."/>
            <person name="Iandolo J.J."/>
        </authorList>
    </citation>
    <scope>NUCLEOTIDE SEQUENCE [LARGE SCALE GENOMIC DNA]</scope>
    <source>
        <strain>NCTC 8325 / PS 47</strain>
    </source>
</reference>
<organism>
    <name type="scientific">Staphylococcus aureus (strain NCTC 8325 / PS 47)</name>
    <dbReference type="NCBI Taxonomy" id="93061"/>
    <lineage>
        <taxon>Bacteria</taxon>
        <taxon>Bacillati</taxon>
        <taxon>Bacillota</taxon>
        <taxon>Bacilli</taxon>
        <taxon>Bacillales</taxon>
        <taxon>Staphylococcaceae</taxon>
        <taxon>Staphylococcus</taxon>
    </lineage>
</organism>
<comment type="function">
    <text evidence="1">Mediates the transport of the dicarboxylates fumarate, malate, and succinate across the cytoplasmic membrane via a Na(+)-electrochemical gradient.</text>
</comment>
<comment type="subcellular location">
    <subcellularLocation>
        <location evidence="3">Cell membrane</location>
        <topology evidence="3">Multi-pass membrane protein</topology>
    </subcellularLocation>
</comment>
<comment type="similarity">
    <text evidence="3">Belongs to the SLC13A/DASS transporter (TC 2.A.47) family. NADC subfamily.</text>
</comment>
<feature type="chain" id="PRO_0000260098" description="Sodium-dependent dicarboxylate transporter SdcS">
    <location>
        <begin position="1"/>
        <end position="520"/>
    </location>
</feature>
<feature type="transmembrane region" description="Helical" evidence="2">
    <location>
        <begin position="30"/>
        <end position="50"/>
    </location>
</feature>
<feature type="transmembrane region" description="Helical" evidence="2">
    <location>
        <begin position="55"/>
        <end position="75"/>
    </location>
</feature>
<feature type="transmembrane region" description="Helical" evidence="2">
    <location>
        <begin position="77"/>
        <end position="97"/>
    </location>
</feature>
<feature type="transmembrane region" description="Helical" evidence="2">
    <location>
        <begin position="104"/>
        <end position="124"/>
    </location>
</feature>
<feature type="transmembrane region" description="Helical" evidence="2">
    <location>
        <begin position="160"/>
        <end position="180"/>
    </location>
</feature>
<feature type="transmembrane region" description="Helical" evidence="2">
    <location>
        <begin position="207"/>
        <end position="227"/>
    </location>
</feature>
<feature type="transmembrane region" description="Helical" evidence="2">
    <location>
        <begin position="242"/>
        <end position="262"/>
    </location>
</feature>
<feature type="transmembrane region" description="Helical" evidence="2">
    <location>
        <begin position="298"/>
        <end position="318"/>
    </location>
</feature>
<feature type="transmembrane region" description="Helical" evidence="2">
    <location>
        <begin position="323"/>
        <end position="343"/>
    </location>
</feature>
<feature type="transmembrane region" description="Helical" evidence="2">
    <location>
        <begin position="362"/>
        <end position="382"/>
    </location>
</feature>
<feature type="transmembrane region" description="Helical" evidence="2">
    <location>
        <begin position="399"/>
        <end position="419"/>
    </location>
</feature>
<feature type="transmembrane region" description="Helical" evidence="2">
    <location>
        <begin position="428"/>
        <end position="448"/>
    </location>
</feature>
<feature type="transmembrane region" description="Helical" evidence="2">
    <location>
        <begin position="452"/>
        <end position="472"/>
    </location>
</feature>
<feature type="transmembrane region" description="Helical" evidence="2">
    <location>
        <begin position="491"/>
        <end position="511"/>
    </location>
</feature>
<name>SDCS_STAA8</name>
<proteinExistence type="inferred from homology"/>
<gene>
    <name type="primary">sdcS</name>
    <name type="ordered locus">SAOUHSC_02137</name>
</gene>
<accession>Q2FWY4</accession>
<dbReference type="EMBL" id="CP000253">
    <property type="protein sequence ID" value="ABD31185.1"/>
    <property type="molecule type" value="Genomic_DNA"/>
</dbReference>
<dbReference type="RefSeq" id="WP_000323161.1">
    <property type="nucleotide sequence ID" value="NZ_LS483365.1"/>
</dbReference>
<dbReference type="RefSeq" id="YP_500627.1">
    <property type="nucleotide sequence ID" value="NC_007795.1"/>
</dbReference>
<dbReference type="SMR" id="Q2FWY4"/>
<dbReference type="STRING" id="93061.SAOUHSC_02137"/>
<dbReference type="PaxDb" id="1280-SAXN108_2017"/>
<dbReference type="GeneID" id="3921834"/>
<dbReference type="KEGG" id="sao:SAOUHSC_02137"/>
<dbReference type="PATRIC" id="fig|93061.5.peg.1938"/>
<dbReference type="eggNOG" id="COG0471">
    <property type="taxonomic scope" value="Bacteria"/>
</dbReference>
<dbReference type="HOGENOM" id="CLU_005170_0_0_9"/>
<dbReference type="OrthoDB" id="9766267at2"/>
<dbReference type="PRO" id="PR:Q2FWY4"/>
<dbReference type="Proteomes" id="UP000008816">
    <property type="component" value="Chromosome"/>
</dbReference>
<dbReference type="GO" id="GO:0005886">
    <property type="term" value="C:plasma membrane"/>
    <property type="evidence" value="ECO:0000318"/>
    <property type="project" value="GO_Central"/>
</dbReference>
<dbReference type="GO" id="GO:0008514">
    <property type="term" value="F:organic anion transmembrane transporter activity"/>
    <property type="evidence" value="ECO:0007669"/>
    <property type="project" value="UniProtKB-ARBA"/>
</dbReference>
<dbReference type="GO" id="GO:0015293">
    <property type="term" value="F:symporter activity"/>
    <property type="evidence" value="ECO:0007669"/>
    <property type="project" value="UniProtKB-KW"/>
</dbReference>
<dbReference type="GO" id="GO:0022857">
    <property type="term" value="F:transmembrane transporter activity"/>
    <property type="evidence" value="ECO:0000318"/>
    <property type="project" value="GO_Central"/>
</dbReference>
<dbReference type="GO" id="GO:1905039">
    <property type="term" value="P:carboxylic acid transmembrane transport"/>
    <property type="evidence" value="ECO:0007669"/>
    <property type="project" value="UniProtKB-ARBA"/>
</dbReference>
<dbReference type="GO" id="GO:0006814">
    <property type="term" value="P:sodium ion transport"/>
    <property type="evidence" value="ECO:0007669"/>
    <property type="project" value="UniProtKB-KW"/>
</dbReference>
<dbReference type="GO" id="GO:0055085">
    <property type="term" value="P:transmembrane transport"/>
    <property type="evidence" value="ECO:0000318"/>
    <property type="project" value="GO_Central"/>
</dbReference>
<dbReference type="CDD" id="cd01115">
    <property type="entry name" value="SLC13_permease"/>
    <property type="match status" value="1"/>
</dbReference>
<dbReference type="InterPro" id="IPR001898">
    <property type="entry name" value="SLC13A/DASS"/>
</dbReference>
<dbReference type="NCBIfam" id="TIGR00785">
    <property type="entry name" value="dass"/>
    <property type="match status" value="1"/>
</dbReference>
<dbReference type="PANTHER" id="PTHR10283">
    <property type="entry name" value="SOLUTE CARRIER FAMILY 13 MEMBER"/>
    <property type="match status" value="1"/>
</dbReference>
<dbReference type="PANTHER" id="PTHR10283:SF82">
    <property type="entry name" value="SOLUTE CARRIER FAMILY 13 MEMBER 2"/>
    <property type="match status" value="1"/>
</dbReference>
<dbReference type="Pfam" id="PF00939">
    <property type="entry name" value="Na_sulph_symp"/>
    <property type="match status" value="1"/>
</dbReference>
<protein>
    <recommendedName>
        <fullName>Sodium-dependent dicarboxylate transporter SdcS</fullName>
    </recommendedName>
    <alternativeName>
        <fullName>Na(+)/dicarboxylate symporter</fullName>
    </alternativeName>
</protein>
<sequence>MAYFNQHQSMISKRYLTFFSKSKKKKPFSAGQLIGLILGPLLFLLTLLFFHPQDLPWKGVYVLAITLWIATWWITEAIPIAATSLLPIVLLPLGHILTPEQVSSEYGNDIIFLFLGGFILAIAMERWNLHTRVALTIINLIGASTSKILLGFMVATGFLSMFVSNTAAVMIMIPIGLAIIKEAHDLQEANTNQTSIQKFEKSLVLAIGYAGTIGGLGTLIGTPPLIILKGQYMQHFGHEISFAKWMIVGIPTVIVLLGITWLYLRYVAFRHDLKYLPGGQTLIKQKLDELGKMKYEEKVVQTIFVLASLLWITREFLLKKWEVTSSVADGTIAIFISILLFIIPAKNTEKHRRIIDWEVAKELPWGVLILFGGGLALAKGISESGLAKWLGEQLKSLNGVSPILIVIVITIFVLFLTEVTSNTATATMILPILATLSVAVGVHPLLLMAPAAMAANCAYMLPVGTPPNAIIFGSGKISIKQMASVGFWVNLISAIIIILVVYYVMPIVLGIDINQPLPLK</sequence>
<evidence type="ECO:0000250" key="1"/>
<evidence type="ECO:0000255" key="2"/>
<evidence type="ECO:0000305" key="3"/>
<keyword id="KW-1003">Cell membrane</keyword>
<keyword id="KW-0406">Ion transport</keyword>
<keyword id="KW-0472">Membrane</keyword>
<keyword id="KW-1185">Reference proteome</keyword>
<keyword id="KW-0915">Sodium</keyword>
<keyword id="KW-0739">Sodium transport</keyword>
<keyword id="KW-0769">Symport</keyword>
<keyword id="KW-0812">Transmembrane</keyword>
<keyword id="KW-1133">Transmembrane helix</keyword>
<keyword id="KW-0813">Transport</keyword>